<dbReference type="EC" id="7.-.-.-" evidence="1"/>
<dbReference type="EMBL" id="CP000305">
    <property type="protein sequence ID" value="ABG18041.1"/>
    <property type="molecule type" value="Genomic_DNA"/>
</dbReference>
<dbReference type="EMBL" id="ACNQ01000009">
    <property type="protein sequence ID" value="EEO77167.1"/>
    <property type="molecule type" value="Genomic_DNA"/>
</dbReference>
<dbReference type="SMR" id="Q1CIY9"/>
<dbReference type="KEGG" id="ypn:YPN_1712"/>
<dbReference type="HOGENOM" id="CLU_010808_2_1_6"/>
<dbReference type="Proteomes" id="UP000008936">
    <property type="component" value="Chromosome"/>
</dbReference>
<dbReference type="GO" id="GO:0005886">
    <property type="term" value="C:plasma membrane"/>
    <property type="evidence" value="ECO:0007669"/>
    <property type="project" value="UniProtKB-SubCell"/>
</dbReference>
<dbReference type="GO" id="GO:0051539">
    <property type="term" value="F:4 iron, 4 sulfur cluster binding"/>
    <property type="evidence" value="ECO:0007669"/>
    <property type="project" value="UniProtKB-KW"/>
</dbReference>
<dbReference type="GO" id="GO:0009055">
    <property type="term" value="F:electron transfer activity"/>
    <property type="evidence" value="ECO:0007669"/>
    <property type="project" value="InterPro"/>
</dbReference>
<dbReference type="GO" id="GO:0046872">
    <property type="term" value="F:metal ion binding"/>
    <property type="evidence" value="ECO:0007669"/>
    <property type="project" value="UniProtKB-KW"/>
</dbReference>
<dbReference type="GO" id="GO:0022900">
    <property type="term" value="P:electron transport chain"/>
    <property type="evidence" value="ECO:0007669"/>
    <property type="project" value="UniProtKB-UniRule"/>
</dbReference>
<dbReference type="Gene3D" id="3.30.70.20">
    <property type="match status" value="1"/>
</dbReference>
<dbReference type="Gene3D" id="3.40.50.11540">
    <property type="entry name" value="NADH-ubiquinone oxidoreductase 51kDa subunit"/>
    <property type="match status" value="1"/>
</dbReference>
<dbReference type="HAMAP" id="MF_00461">
    <property type="entry name" value="RsxC_RnfC"/>
    <property type="match status" value="1"/>
</dbReference>
<dbReference type="InterPro" id="IPR017896">
    <property type="entry name" value="4Fe4S_Fe-S-bd"/>
</dbReference>
<dbReference type="InterPro" id="IPR017900">
    <property type="entry name" value="4Fe4S_Fe_S_CS"/>
</dbReference>
<dbReference type="InterPro" id="IPR010208">
    <property type="entry name" value="Ion_transpt_RnfC/RsxC"/>
</dbReference>
<dbReference type="InterPro" id="IPR011538">
    <property type="entry name" value="Nuo51_FMN-bd"/>
</dbReference>
<dbReference type="InterPro" id="IPR037225">
    <property type="entry name" value="Nuo51_FMN-bd_sf"/>
</dbReference>
<dbReference type="InterPro" id="IPR026902">
    <property type="entry name" value="RnfC_N"/>
</dbReference>
<dbReference type="InterPro" id="IPR019554">
    <property type="entry name" value="Soluble_ligand-bd"/>
</dbReference>
<dbReference type="NCBIfam" id="NF003454">
    <property type="entry name" value="PRK05035.1"/>
    <property type="match status" value="1"/>
</dbReference>
<dbReference type="NCBIfam" id="TIGR01945">
    <property type="entry name" value="rnfC"/>
    <property type="match status" value="1"/>
</dbReference>
<dbReference type="PANTHER" id="PTHR43034">
    <property type="entry name" value="ION-TRANSLOCATING OXIDOREDUCTASE COMPLEX SUBUNIT C"/>
    <property type="match status" value="1"/>
</dbReference>
<dbReference type="PANTHER" id="PTHR43034:SF2">
    <property type="entry name" value="ION-TRANSLOCATING OXIDOREDUCTASE COMPLEX SUBUNIT C"/>
    <property type="match status" value="1"/>
</dbReference>
<dbReference type="Pfam" id="PF01512">
    <property type="entry name" value="Complex1_51K"/>
    <property type="match status" value="1"/>
</dbReference>
<dbReference type="Pfam" id="PF12838">
    <property type="entry name" value="Fer4_7"/>
    <property type="match status" value="1"/>
</dbReference>
<dbReference type="Pfam" id="PF13375">
    <property type="entry name" value="RnfC_N"/>
    <property type="match status" value="1"/>
</dbReference>
<dbReference type="Pfam" id="PF10531">
    <property type="entry name" value="SLBB"/>
    <property type="match status" value="1"/>
</dbReference>
<dbReference type="SUPFAM" id="SSF46548">
    <property type="entry name" value="alpha-helical ferredoxin"/>
    <property type="match status" value="1"/>
</dbReference>
<dbReference type="SUPFAM" id="SSF142019">
    <property type="entry name" value="Nqo1 FMN-binding domain-like"/>
    <property type="match status" value="1"/>
</dbReference>
<dbReference type="PROSITE" id="PS00198">
    <property type="entry name" value="4FE4S_FER_1"/>
    <property type="match status" value="2"/>
</dbReference>
<dbReference type="PROSITE" id="PS51379">
    <property type="entry name" value="4FE4S_FER_2"/>
    <property type="match status" value="2"/>
</dbReference>
<sequence>MFKLFTARQHDKIWDFDGGIHPPEMKLQSSTVPMRIAPLPDQLIIPLQQHLGPEGELRVRAGEQVLKGQPLTVGRGRTVPVHAPTSGMITAIAPHTTAHPSGLAELCVHITPDGEDRWREQQPWADYRQRDKMALLDRIHQAGIAGLGGAGFPTASKLQGGLNGIITLIINAAECEPYITADDRLMQEHADEVITGIHILRHLLQPQQVLIGIEDNKPEAIAALQRALRGQDDIHLRVVPTKYPSGGAKQLTKILTGKEVPFGKHSSSIGVLMQNVGTVVAIKRAVIDDEPLIERVVTLTGDALSSPGNFWARIGTPVLYLLKLAGFKPQNPPMVIMGGPLMGFTLPSLDVPIVKISNCILAPAETEMGLSEPEQSCIRCGLCVDACPAGLLPQQLYWFSRGEEHEKARNHNLFDCIECGACAYVCPSNIPLVQYYRQEKAEIRALDQESARAAEAKARFEAKQARLAREKLARELRHKQAAVKLTDADQQTVDAAVSRLTRQSDGSESVINIPAGQMPDNSAVIAAREARKAQARARQAEKQQARSTEETTDVVDPRQAAVAAAIARVKAKKAVQAQHVTTDVAEAGSEAMAEDPRKAAVAAAIARVKAKKAAQAQHVTTDVAEAGSEAMAEDPRKAAVAAAIARVKAKKAAQAINPD</sequence>
<evidence type="ECO:0000255" key="1">
    <source>
        <dbReference type="HAMAP-Rule" id="MF_00461"/>
    </source>
</evidence>
<name>RNFC_YERPN</name>
<accession>Q1CIY9</accession>
<accession>C4GT07</accession>
<reference key="1">
    <citation type="journal article" date="2006" name="J. Bacteriol.">
        <title>Complete genome sequence of Yersinia pestis strains Antiqua and Nepal516: evidence of gene reduction in an emerging pathogen.</title>
        <authorList>
            <person name="Chain P.S.G."/>
            <person name="Hu P."/>
            <person name="Malfatti S.A."/>
            <person name="Radnedge L."/>
            <person name="Larimer F."/>
            <person name="Vergez L.M."/>
            <person name="Worsham P."/>
            <person name="Chu M.C."/>
            <person name="Andersen G.L."/>
        </authorList>
    </citation>
    <scope>NUCLEOTIDE SEQUENCE [LARGE SCALE GENOMIC DNA]</scope>
    <source>
        <strain>Nepal516</strain>
    </source>
</reference>
<reference key="2">
    <citation type="submission" date="2009-04" db="EMBL/GenBank/DDBJ databases">
        <title>Yersinia pestis Nepal516A whole genome shotgun sequencing project.</title>
        <authorList>
            <person name="Plunkett G. III"/>
            <person name="Anderson B.D."/>
            <person name="Baumler D.J."/>
            <person name="Burland V."/>
            <person name="Cabot E.L."/>
            <person name="Glasner J.D."/>
            <person name="Mau B."/>
            <person name="Neeno-Eckwall E."/>
            <person name="Perna N.T."/>
            <person name="Munk A.C."/>
            <person name="Tapia R."/>
            <person name="Green L.D."/>
            <person name="Rogers Y.C."/>
            <person name="Detter J.C."/>
            <person name="Bruce D.C."/>
            <person name="Brettin T.S."/>
        </authorList>
    </citation>
    <scope>NUCLEOTIDE SEQUENCE [LARGE SCALE GENOMIC DNA]</scope>
    <source>
        <strain>Nepal516</strain>
    </source>
</reference>
<keyword id="KW-0004">4Fe-4S</keyword>
<keyword id="KW-0997">Cell inner membrane</keyword>
<keyword id="KW-1003">Cell membrane</keyword>
<keyword id="KW-0249">Electron transport</keyword>
<keyword id="KW-0408">Iron</keyword>
<keyword id="KW-0411">Iron-sulfur</keyword>
<keyword id="KW-0472">Membrane</keyword>
<keyword id="KW-0479">Metal-binding</keyword>
<keyword id="KW-0677">Repeat</keyword>
<keyword id="KW-1278">Translocase</keyword>
<keyword id="KW-0813">Transport</keyword>
<gene>
    <name evidence="1" type="primary">rnfC</name>
    <name type="ordered locus">YPN_1712</name>
    <name type="ORF">YP516_1902</name>
</gene>
<comment type="function">
    <text evidence="1">Part of a membrane-bound complex that couples electron transfer with translocation of ions across the membrane.</text>
</comment>
<comment type="cofactor">
    <cofactor evidence="1">
        <name>[4Fe-4S] cluster</name>
        <dbReference type="ChEBI" id="CHEBI:49883"/>
    </cofactor>
    <text evidence="1">Binds 2 [4Fe-4S] clusters per subunit.</text>
</comment>
<comment type="subunit">
    <text evidence="1">The complex is composed of six subunits: RnfA, RnfB, RnfC, RnfD, RnfE and RnfG.</text>
</comment>
<comment type="subcellular location">
    <subcellularLocation>
        <location evidence="1">Cell inner membrane</location>
        <topology evidence="1">Peripheral membrane protein</topology>
    </subcellularLocation>
</comment>
<comment type="similarity">
    <text evidence="1">Belongs to the 4Fe4S bacterial-type ferredoxin family. RnfC subfamily.</text>
</comment>
<feature type="chain" id="PRO_1000013619" description="Ion-translocating oxidoreductase complex subunit C">
    <location>
        <begin position="1"/>
        <end position="659"/>
    </location>
</feature>
<feature type="domain" description="4Fe-4S ferredoxin-type 1" evidence="1">
    <location>
        <begin position="366"/>
        <end position="397"/>
    </location>
</feature>
<feature type="domain" description="4Fe-4S ferredoxin-type 2" evidence="1">
    <location>
        <begin position="407"/>
        <end position="436"/>
    </location>
</feature>
<feature type="binding site" evidence="1">
    <location>
        <position position="377"/>
    </location>
    <ligand>
        <name>[4Fe-4S] cluster</name>
        <dbReference type="ChEBI" id="CHEBI:49883"/>
        <label>1</label>
    </ligand>
</feature>
<feature type="binding site" evidence="1">
    <location>
        <position position="380"/>
    </location>
    <ligand>
        <name>[4Fe-4S] cluster</name>
        <dbReference type="ChEBI" id="CHEBI:49883"/>
        <label>1</label>
    </ligand>
</feature>
<feature type="binding site" evidence="1">
    <location>
        <position position="383"/>
    </location>
    <ligand>
        <name>[4Fe-4S] cluster</name>
        <dbReference type="ChEBI" id="CHEBI:49883"/>
        <label>1</label>
    </ligand>
</feature>
<feature type="binding site" evidence="1">
    <location>
        <position position="387"/>
    </location>
    <ligand>
        <name>[4Fe-4S] cluster</name>
        <dbReference type="ChEBI" id="CHEBI:49883"/>
        <label>2</label>
    </ligand>
</feature>
<feature type="binding site" evidence="1">
    <location>
        <position position="416"/>
    </location>
    <ligand>
        <name>[4Fe-4S] cluster</name>
        <dbReference type="ChEBI" id="CHEBI:49883"/>
        <label>2</label>
    </ligand>
</feature>
<feature type="binding site" evidence="1">
    <location>
        <position position="419"/>
    </location>
    <ligand>
        <name>[4Fe-4S] cluster</name>
        <dbReference type="ChEBI" id="CHEBI:49883"/>
        <label>2</label>
    </ligand>
</feature>
<feature type="binding site" evidence="1">
    <location>
        <position position="422"/>
    </location>
    <ligand>
        <name>[4Fe-4S] cluster</name>
        <dbReference type="ChEBI" id="CHEBI:49883"/>
        <label>2</label>
    </ligand>
</feature>
<feature type="binding site" evidence="1">
    <location>
        <position position="426"/>
    </location>
    <ligand>
        <name>[4Fe-4S] cluster</name>
        <dbReference type="ChEBI" id="CHEBI:49883"/>
        <label>1</label>
    </ligand>
</feature>
<proteinExistence type="inferred from homology"/>
<protein>
    <recommendedName>
        <fullName evidence="1">Ion-translocating oxidoreductase complex subunit C</fullName>
        <ecNumber evidence="1">7.-.-.-</ecNumber>
    </recommendedName>
    <alternativeName>
        <fullName evidence="1">Rnf electron transport complex subunit C</fullName>
    </alternativeName>
</protein>
<organism>
    <name type="scientific">Yersinia pestis bv. Antiqua (strain Nepal516)</name>
    <dbReference type="NCBI Taxonomy" id="377628"/>
    <lineage>
        <taxon>Bacteria</taxon>
        <taxon>Pseudomonadati</taxon>
        <taxon>Pseudomonadota</taxon>
        <taxon>Gammaproteobacteria</taxon>
        <taxon>Enterobacterales</taxon>
        <taxon>Yersiniaceae</taxon>
        <taxon>Yersinia</taxon>
    </lineage>
</organism>